<proteinExistence type="evidence at protein level"/>
<accession>Q13304</accession>
<accession>A8K9L0</accession>
<accession>B2R9X0</accession>
<accession>Q8N5S7</accession>
<accession>Q9UDZ6</accession>
<accession>Q9UE21</accession>
<name>GPR17_HUMAN</name>
<protein>
    <recommendedName>
        <fullName>Uracil nucleotide/cysteinyl leukotriene receptor</fullName>
        <shortName>UDP/CysLT receptor</shortName>
    </recommendedName>
    <alternativeName>
        <fullName>G-protein coupled receptor 17</fullName>
    </alternativeName>
    <alternativeName>
        <fullName>P2Y-like receptor</fullName>
    </alternativeName>
    <alternativeName>
        <fullName>R12</fullName>
    </alternativeName>
</protein>
<feature type="chain" id="PRO_0000069536" description="Uracil nucleotide/cysteinyl leukotriene receptor">
    <location>
        <begin position="1"/>
        <end position="367"/>
    </location>
</feature>
<feature type="topological domain" description="Extracellular" evidence="1">
    <location>
        <begin position="1"/>
        <end position="64"/>
    </location>
</feature>
<feature type="transmembrane region" description="Helical; Name=1" evidence="1">
    <location>
        <begin position="65"/>
        <end position="85"/>
    </location>
</feature>
<feature type="topological domain" description="Cytoplasmic" evidence="1">
    <location>
        <begin position="86"/>
        <end position="92"/>
    </location>
</feature>
<feature type="transmembrane region" description="Helical; Name=2" evidence="1">
    <location>
        <begin position="93"/>
        <end position="113"/>
    </location>
</feature>
<feature type="topological domain" description="Extracellular" evidence="1">
    <location>
        <begin position="114"/>
        <end position="133"/>
    </location>
</feature>
<feature type="transmembrane region" description="Helical; Name=3" evidence="1">
    <location>
        <begin position="134"/>
        <end position="154"/>
    </location>
</feature>
<feature type="topological domain" description="Cytoplasmic" evidence="1">
    <location>
        <begin position="155"/>
        <end position="175"/>
    </location>
</feature>
<feature type="transmembrane region" description="Helical; Name=4" evidence="1">
    <location>
        <begin position="176"/>
        <end position="196"/>
    </location>
</feature>
<feature type="topological domain" description="Extracellular" evidence="1">
    <location>
        <begin position="197"/>
        <end position="223"/>
    </location>
</feature>
<feature type="transmembrane region" description="Helical; Name=5" evidence="1">
    <location>
        <begin position="224"/>
        <end position="244"/>
    </location>
</feature>
<feature type="topological domain" description="Cytoplasmic" evidence="1">
    <location>
        <begin position="245"/>
        <end position="260"/>
    </location>
</feature>
<feature type="transmembrane region" description="Helical; Name=6" evidence="1">
    <location>
        <begin position="261"/>
        <end position="281"/>
    </location>
</feature>
<feature type="topological domain" description="Extracellular" evidence="1">
    <location>
        <begin position="282"/>
        <end position="308"/>
    </location>
</feature>
<feature type="transmembrane region" description="Helical; Name=7" evidence="1">
    <location>
        <begin position="309"/>
        <end position="329"/>
    </location>
</feature>
<feature type="topological domain" description="Cytoplasmic" evidence="1">
    <location>
        <begin position="330"/>
        <end position="367"/>
    </location>
</feature>
<feature type="region of interest" description="Disordered" evidence="3">
    <location>
        <begin position="1"/>
        <end position="28"/>
    </location>
</feature>
<feature type="glycosylation site" description="N-linked (GlcNAc...) asparagine" evidence="1">
    <location>
        <position position="42"/>
    </location>
</feature>
<feature type="glycosylation site" description="N-linked (GlcNAc...) asparagine" evidence="1">
    <location>
        <position position="204"/>
    </location>
</feature>
<feature type="glycosylation site" description="N-linked (GlcNAc...) asparagine" evidence="1">
    <location>
        <position position="282"/>
    </location>
</feature>
<feature type="disulfide bond" evidence="2">
    <location>
        <begin position="132"/>
        <end position="209"/>
    </location>
</feature>
<feature type="splice variant" id="VSP_001987" description="In isoform 2." evidence="5 6 7">
    <location>
        <begin position="1"/>
        <end position="28"/>
    </location>
</feature>
<feature type="sequence conflict" description="In Ref. 5; AAH31653." evidence="8" ref="5">
    <original>L</original>
    <variation>F</variation>
    <location>
        <position position="83"/>
    </location>
</feature>
<feature type="helix" evidence="9">
    <location>
        <begin position="56"/>
        <end position="86"/>
    </location>
</feature>
<feature type="turn" evidence="9">
    <location>
        <begin position="87"/>
        <end position="89"/>
    </location>
</feature>
<feature type="helix" evidence="9">
    <location>
        <begin position="93"/>
        <end position="120"/>
    </location>
</feature>
<feature type="helix" evidence="9">
    <location>
        <begin position="129"/>
        <end position="161"/>
    </location>
</feature>
<feature type="helix" evidence="9">
    <location>
        <begin position="166"/>
        <end position="169"/>
    </location>
</feature>
<feature type="helix" evidence="9">
    <location>
        <begin position="173"/>
        <end position="190"/>
    </location>
</feature>
<feature type="helix" evidence="9">
    <location>
        <begin position="193"/>
        <end position="196"/>
    </location>
</feature>
<feature type="strand" evidence="9">
    <location>
        <begin position="203"/>
        <end position="205"/>
    </location>
</feature>
<feature type="helix" evidence="9">
    <location>
        <begin position="210"/>
        <end position="212"/>
    </location>
</feature>
<feature type="helix" evidence="9">
    <location>
        <begin position="220"/>
        <end position="248"/>
    </location>
</feature>
<feature type="helix" evidence="9">
    <location>
        <begin position="255"/>
        <end position="274"/>
    </location>
</feature>
<feature type="helix" evidence="9">
    <location>
        <begin position="277"/>
        <end position="290"/>
    </location>
</feature>
<feature type="helix" evidence="9">
    <location>
        <begin position="297"/>
        <end position="326"/>
    </location>
</feature>
<feature type="strand" evidence="9">
    <location>
        <begin position="330"/>
        <end position="332"/>
    </location>
</feature>
<feature type="helix" evidence="9">
    <location>
        <begin position="333"/>
        <end position="338"/>
    </location>
</feature>
<sequence length="367" mass="40989">MSKRSWWAGSRKPPREMLKLSGSDSSQSMNGLEVAPPGLITNFSLATAEQCGQETPLENMLFASFYLLDFILALVGNTLALWLFIRDHKSGTPANVFLMHLAVADLSCVLVLPTRLVYHFSGNHWPFGEIACRLTGFLFYLNMYASIYFLTCISADRFLAIVHPVKSLKLRRPLYAHLACAFLWVVVAVAMAPLLVSPQTVQTNHTVVCLQLYREKASHHALVSLAVAFTFPFITTVTCYLLIIRSLRQGLRVEKRLKTKAVRMIAIVLAIFLVCFVPYHVNRSVYVLHYRSHGASCATQRILALANRITSCLTSLNGALDPIMYFFVAEKFRHALCNLLCGKRLKGPPPSFEGKTNESSLSAKSEL</sequence>
<comment type="function">
    <text evidence="4">Dual specificity receptor for uracil nucleotides and cysteinyl leukotrienes (CysLTs). Signals through G(i) and inhibition of adenylyl cyclase. May mediate brain damage by nucleotides and CysLTs following ischemia.</text>
</comment>
<comment type="interaction">
    <interactant intactId="EBI-45351003">
        <id>Q13304-2</id>
    </interactant>
    <interactant intactId="EBI-2835281">
        <id>P25025</id>
        <label>CXCR2</label>
    </interactant>
    <organismsDiffer>false</organismsDiffer>
    <experiments>3</experiments>
</comment>
<comment type="subcellular location">
    <subcellularLocation>
        <location>Cell membrane</location>
        <topology>Multi-pass membrane protein</topology>
    </subcellularLocation>
</comment>
<comment type="alternative products">
    <event type="alternative splicing"/>
    <isoform>
        <id>Q13304-1</id>
        <name>1</name>
        <sequence type="displayed"/>
    </isoform>
    <isoform>
        <id>Q13304-2</id>
        <name>2</name>
        <sequence type="described" ref="VSP_001987"/>
    </isoform>
</comment>
<comment type="tissue specificity">
    <text evidence="4">Expressed in brain, kidney, heart and umbilical vein endothelial cells. Highest level in brain.</text>
</comment>
<comment type="similarity">
    <text evidence="2">Belongs to the G-protein coupled receptor 1 family.</text>
</comment>
<dbReference type="EMBL" id="U33447">
    <property type="protein sequence ID" value="AAB16746.1"/>
    <property type="molecule type" value="Genomic_DNA"/>
</dbReference>
<dbReference type="EMBL" id="Y12546">
    <property type="protein sequence ID" value="CAA73144.1"/>
    <property type="molecule type" value="mRNA"/>
</dbReference>
<dbReference type="EMBL" id="Z94154">
    <property type="protein sequence ID" value="CAB08107.1"/>
    <property type="molecule type" value="mRNA"/>
</dbReference>
<dbReference type="EMBL" id="Z94155">
    <property type="protein sequence ID" value="CAB08108.1"/>
    <property type="molecule type" value="mRNA"/>
</dbReference>
<dbReference type="EMBL" id="AK292725">
    <property type="protein sequence ID" value="BAF85414.1"/>
    <property type="molecule type" value="mRNA"/>
</dbReference>
<dbReference type="EMBL" id="AK313949">
    <property type="protein sequence ID" value="BAG36667.1"/>
    <property type="molecule type" value="mRNA"/>
</dbReference>
<dbReference type="EMBL" id="CH471103">
    <property type="protein sequence ID" value="EAW95337.1"/>
    <property type="molecule type" value="Genomic_DNA"/>
</dbReference>
<dbReference type="EMBL" id="BC031653">
    <property type="protein sequence ID" value="AAH31653.1"/>
    <property type="molecule type" value="mRNA"/>
</dbReference>
<dbReference type="EMBL" id="BC039595">
    <property type="status" value="NOT_ANNOTATED_CDS"/>
    <property type="molecule type" value="mRNA"/>
</dbReference>
<dbReference type="CCDS" id="CCDS2148.1">
    <molecule id="Q13304-1"/>
</dbReference>
<dbReference type="CCDS" id="CCDS92862.1">
    <molecule id="Q13304-2"/>
</dbReference>
<dbReference type="RefSeq" id="NP_001154887.1">
    <molecule id="Q13304-1"/>
    <property type="nucleotide sequence ID" value="NM_001161415.2"/>
</dbReference>
<dbReference type="RefSeq" id="NP_001154888.1">
    <molecule id="Q13304-2"/>
    <property type="nucleotide sequence ID" value="NM_001161416.2"/>
</dbReference>
<dbReference type="RefSeq" id="NP_001154889.1">
    <molecule id="Q13304-2"/>
    <property type="nucleotide sequence ID" value="NM_001161417.2"/>
</dbReference>
<dbReference type="RefSeq" id="NP_005282.1">
    <molecule id="Q13304-1"/>
    <property type="nucleotide sequence ID" value="NM_005291.3"/>
</dbReference>
<dbReference type="RefSeq" id="XP_016859322.1">
    <property type="nucleotide sequence ID" value="XM_017003833.1"/>
</dbReference>
<dbReference type="PDB" id="7Y89">
    <property type="method" value="EM"/>
    <property type="resolution" value="3.02 A"/>
    <property type="chains" value="A=50-342"/>
</dbReference>
<dbReference type="PDBsum" id="7Y89"/>
<dbReference type="EMDB" id="EMD-33682"/>
<dbReference type="SMR" id="Q13304"/>
<dbReference type="BioGRID" id="109099">
    <property type="interactions" value="288"/>
</dbReference>
<dbReference type="FunCoup" id="Q13304">
    <property type="interactions" value="752"/>
</dbReference>
<dbReference type="IntAct" id="Q13304">
    <property type="interactions" value="281"/>
</dbReference>
<dbReference type="MINT" id="Q13304"/>
<dbReference type="STRING" id="9606.ENSP00000442982"/>
<dbReference type="BindingDB" id="Q13304"/>
<dbReference type="ChEMBL" id="CHEMBL1075162"/>
<dbReference type="DrugBank" id="DB03501">
    <property type="generic name" value="Galactose-uridine-5'-diphosphate"/>
</dbReference>
<dbReference type="DrugBank" id="DB01861">
    <property type="generic name" value="Uridine diphosphate glucose"/>
</dbReference>
<dbReference type="DrugBank" id="DB03435">
    <property type="generic name" value="Uridine-5'-Diphosphate"/>
</dbReference>
<dbReference type="DrugCentral" id="Q13304"/>
<dbReference type="GuidetoPHARMACOLOGY" id="88"/>
<dbReference type="GlyCosmos" id="Q13304">
    <property type="glycosylation" value="3 sites, No reported glycans"/>
</dbReference>
<dbReference type="GlyGen" id="Q13304">
    <property type="glycosylation" value="3 sites"/>
</dbReference>
<dbReference type="iPTMnet" id="Q13304"/>
<dbReference type="PhosphoSitePlus" id="Q13304"/>
<dbReference type="BioMuta" id="GPR17"/>
<dbReference type="DMDM" id="21264435"/>
<dbReference type="MassIVE" id="Q13304"/>
<dbReference type="PaxDb" id="9606-ENSP00000442982"/>
<dbReference type="PeptideAtlas" id="Q13304"/>
<dbReference type="ProteomicsDB" id="59291">
    <molecule id="Q13304-1"/>
</dbReference>
<dbReference type="ProteomicsDB" id="59292">
    <molecule id="Q13304-2"/>
</dbReference>
<dbReference type="Antibodypedia" id="18483">
    <property type="antibodies" value="435 antibodies from 35 providers"/>
</dbReference>
<dbReference type="DNASU" id="2840"/>
<dbReference type="Ensembl" id="ENST00000272644.7">
    <molecule id="Q13304-1"/>
    <property type="protein sequence ID" value="ENSP00000272644.3"/>
    <property type="gene ID" value="ENSG00000144230.17"/>
</dbReference>
<dbReference type="Ensembl" id="ENST00000393018.3">
    <molecule id="Q13304-1"/>
    <property type="protein sequence ID" value="ENSP00000376741.3"/>
    <property type="gene ID" value="ENSG00000144230.17"/>
</dbReference>
<dbReference type="Ensembl" id="ENST00000486700.2">
    <molecule id="Q13304-2"/>
    <property type="protein sequence ID" value="ENSP00000508383.1"/>
    <property type="gene ID" value="ENSG00000144230.17"/>
</dbReference>
<dbReference type="Ensembl" id="ENST00000544369.5">
    <molecule id="Q13304-1"/>
    <property type="protein sequence ID" value="ENSP00000442982.1"/>
    <property type="gene ID" value="ENSG00000144230.17"/>
</dbReference>
<dbReference type="GeneID" id="2840"/>
<dbReference type="KEGG" id="hsa:2840"/>
<dbReference type="MANE-Select" id="ENST00000486700.2">
    <molecule id="Q13304-2"/>
    <property type="protein sequence ID" value="ENSP00000508383.1"/>
    <property type="RefSeq nucleotide sequence ID" value="NM_001161417.2"/>
    <property type="RefSeq protein sequence ID" value="NP_001154889.1"/>
</dbReference>
<dbReference type="UCSC" id="uc002tpc.4">
    <molecule id="Q13304-1"/>
    <property type="organism name" value="human"/>
</dbReference>
<dbReference type="AGR" id="HGNC:4471"/>
<dbReference type="CTD" id="2840"/>
<dbReference type="DisGeNET" id="2840"/>
<dbReference type="GeneCards" id="GPR17"/>
<dbReference type="HGNC" id="HGNC:4471">
    <property type="gene designation" value="GPR17"/>
</dbReference>
<dbReference type="HPA" id="ENSG00000144230">
    <property type="expression patterns" value="Tissue enhanced (brain, intestine)"/>
</dbReference>
<dbReference type="MIM" id="603071">
    <property type="type" value="gene"/>
</dbReference>
<dbReference type="neXtProt" id="NX_Q13304"/>
<dbReference type="OpenTargets" id="ENSG00000144230"/>
<dbReference type="PharmGKB" id="PA28859"/>
<dbReference type="VEuPathDB" id="HostDB:ENSG00000144230"/>
<dbReference type="eggNOG" id="ENOG502QW6S">
    <property type="taxonomic scope" value="Eukaryota"/>
</dbReference>
<dbReference type="GeneTree" id="ENSGT01130000278275"/>
<dbReference type="HOGENOM" id="CLU_009579_8_2_1"/>
<dbReference type="InParanoid" id="Q13304"/>
<dbReference type="OMA" id="TCLNGAM"/>
<dbReference type="OrthoDB" id="6503655at2759"/>
<dbReference type="PAN-GO" id="Q13304">
    <property type="GO annotations" value="4 GO annotations based on evolutionary models"/>
</dbReference>
<dbReference type="PhylomeDB" id="Q13304"/>
<dbReference type="TreeFam" id="TF330775"/>
<dbReference type="PathwayCommons" id="Q13304"/>
<dbReference type="Reactome" id="R-HSA-391906">
    <property type="pathway name" value="Leukotriene receptors"/>
</dbReference>
<dbReference type="Reactome" id="R-HSA-416476">
    <property type="pathway name" value="G alpha (q) signalling events"/>
</dbReference>
<dbReference type="Reactome" id="R-HSA-417957">
    <property type="pathway name" value="P2Y receptors"/>
</dbReference>
<dbReference type="Reactome" id="R-HSA-418594">
    <property type="pathway name" value="G alpha (i) signalling events"/>
</dbReference>
<dbReference type="SignaLink" id="Q13304"/>
<dbReference type="SIGNOR" id="Q13304"/>
<dbReference type="BioGRID-ORCS" id="2840">
    <property type="hits" value="94 hits in 1142 CRISPR screens"/>
</dbReference>
<dbReference type="GeneWiki" id="GPR17"/>
<dbReference type="GenomeRNAi" id="2840"/>
<dbReference type="Pharos" id="Q13304">
    <property type="development level" value="Tchem"/>
</dbReference>
<dbReference type="PRO" id="PR:Q13304"/>
<dbReference type="Proteomes" id="UP000005640">
    <property type="component" value="Chromosome 2"/>
</dbReference>
<dbReference type="RNAct" id="Q13304">
    <property type="molecule type" value="protein"/>
</dbReference>
<dbReference type="Bgee" id="ENSG00000144230">
    <property type="expression patterns" value="Expressed in apex of heart and 111 other cell types or tissues"/>
</dbReference>
<dbReference type="ExpressionAtlas" id="Q13304">
    <property type="expression patterns" value="baseline and differential"/>
</dbReference>
<dbReference type="GO" id="GO:0005886">
    <property type="term" value="C:plasma membrane"/>
    <property type="evidence" value="ECO:0000318"/>
    <property type="project" value="GO_Central"/>
</dbReference>
<dbReference type="GO" id="GO:0004950">
    <property type="term" value="F:chemokine receptor activity"/>
    <property type="evidence" value="ECO:0000304"/>
    <property type="project" value="ProtInc"/>
</dbReference>
<dbReference type="GO" id="GO:0004930">
    <property type="term" value="F:G protein-coupled receptor activity"/>
    <property type="evidence" value="ECO:0000318"/>
    <property type="project" value="GO_Central"/>
</dbReference>
<dbReference type="GO" id="GO:0033612">
    <property type="term" value="F:receptor serine/threonine kinase binding"/>
    <property type="evidence" value="ECO:0007669"/>
    <property type="project" value="Ensembl"/>
</dbReference>
<dbReference type="GO" id="GO:0007186">
    <property type="term" value="P:G protein-coupled receptor signaling pathway"/>
    <property type="evidence" value="ECO:0000318"/>
    <property type="project" value="GO_Central"/>
</dbReference>
<dbReference type="GO" id="GO:0002862">
    <property type="term" value="P:negative regulation of inflammatory response to antigenic stimulus"/>
    <property type="evidence" value="ECO:0007669"/>
    <property type="project" value="Ensembl"/>
</dbReference>
<dbReference type="GO" id="GO:0048709">
    <property type="term" value="P:oligodendrocyte differentiation"/>
    <property type="evidence" value="ECO:0007669"/>
    <property type="project" value="Ensembl"/>
</dbReference>
<dbReference type="CDD" id="cd15161">
    <property type="entry name" value="7tmA_GPR17"/>
    <property type="match status" value="1"/>
</dbReference>
<dbReference type="FunFam" id="1.20.1070.10:FF:000152">
    <property type="entry name" value="uracil nucleotide/cysteinyl leukotriene receptor"/>
    <property type="match status" value="1"/>
</dbReference>
<dbReference type="Gene3D" id="1.20.1070.10">
    <property type="entry name" value="Rhodopsin 7-helix transmembrane proteins"/>
    <property type="match status" value="1"/>
</dbReference>
<dbReference type="InterPro" id="IPR000276">
    <property type="entry name" value="GPCR_Rhodpsn"/>
</dbReference>
<dbReference type="InterPro" id="IPR017452">
    <property type="entry name" value="GPCR_Rhodpsn_7TM"/>
</dbReference>
<dbReference type="PANTHER" id="PTHR24232">
    <property type="entry name" value="G-PROTEIN COUPLED RECEPTOR"/>
    <property type="match status" value="1"/>
</dbReference>
<dbReference type="PANTHER" id="PTHR24232:SF44">
    <property type="entry name" value="URACIL NUCLEOTIDE_CYSTEINYL LEUKOTRIENE RECEPTOR"/>
    <property type="match status" value="1"/>
</dbReference>
<dbReference type="Pfam" id="PF00001">
    <property type="entry name" value="7tm_1"/>
    <property type="match status" value="1"/>
</dbReference>
<dbReference type="PRINTS" id="PR00237">
    <property type="entry name" value="GPCRRHODOPSN"/>
</dbReference>
<dbReference type="PRINTS" id="PR01157">
    <property type="entry name" value="P2YPURNOCPTR"/>
</dbReference>
<dbReference type="SUPFAM" id="SSF81321">
    <property type="entry name" value="Family A G protein-coupled receptor-like"/>
    <property type="match status" value="1"/>
</dbReference>
<dbReference type="PROSITE" id="PS00237">
    <property type="entry name" value="G_PROTEIN_RECEP_F1_1"/>
    <property type="match status" value="1"/>
</dbReference>
<dbReference type="PROSITE" id="PS50262">
    <property type="entry name" value="G_PROTEIN_RECEP_F1_2"/>
    <property type="match status" value="1"/>
</dbReference>
<evidence type="ECO:0000255" key="1"/>
<evidence type="ECO:0000255" key="2">
    <source>
        <dbReference type="PROSITE-ProRule" id="PRU00521"/>
    </source>
</evidence>
<evidence type="ECO:0000256" key="3">
    <source>
        <dbReference type="SAM" id="MobiDB-lite"/>
    </source>
</evidence>
<evidence type="ECO:0000269" key="4">
    <source>
    </source>
</evidence>
<evidence type="ECO:0000303" key="5">
    <source>
    </source>
</evidence>
<evidence type="ECO:0000303" key="6">
    <source>
    </source>
</evidence>
<evidence type="ECO:0000303" key="7">
    <source>
    </source>
</evidence>
<evidence type="ECO:0000305" key="8"/>
<evidence type="ECO:0007829" key="9">
    <source>
        <dbReference type="PDB" id="7Y89"/>
    </source>
</evidence>
<reference key="1">
    <citation type="journal article" date="1996" name="J. Leukoc. Biol.">
        <title>New members of the chemokine receptor gene family.</title>
        <authorList>
            <person name="Raport C.J."/>
            <person name="Schweickart V.L."/>
            <person name="Chantry D."/>
            <person name="Eddy R.L. Jr."/>
            <person name="Shows T.B."/>
            <person name="Godiska R."/>
            <person name="Gray P.W."/>
        </authorList>
    </citation>
    <scope>NUCLEOTIDE SEQUENCE [GENOMIC DNA] (ISOFORM 2)</scope>
</reference>
<reference key="2">
    <citation type="journal article" date="1998" name="J. Neurochem.">
        <title>A novel orphan G protein-coupled receptor primarily expressed in the brain is localized on human chromosomal band 2q21.</title>
        <authorList>
            <person name="Blaesius R.H."/>
            <person name="Weber R.G."/>
            <person name="Lichter P."/>
            <person name="Ogilvie A."/>
        </authorList>
    </citation>
    <scope>NUCLEOTIDE SEQUENCE [MRNA] (ISOFORMS 1 AND 2)</scope>
    <source>
        <tissue>Hippocampus</tissue>
    </source>
</reference>
<reference key="3">
    <citation type="journal article" date="2004" name="Nat. Genet.">
        <title>Complete sequencing and characterization of 21,243 full-length human cDNAs.</title>
        <authorList>
            <person name="Ota T."/>
            <person name="Suzuki Y."/>
            <person name="Nishikawa T."/>
            <person name="Otsuki T."/>
            <person name="Sugiyama T."/>
            <person name="Irie R."/>
            <person name="Wakamatsu A."/>
            <person name="Hayashi K."/>
            <person name="Sato H."/>
            <person name="Nagai K."/>
            <person name="Kimura K."/>
            <person name="Makita H."/>
            <person name="Sekine M."/>
            <person name="Obayashi M."/>
            <person name="Nishi T."/>
            <person name="Shibahara T."/>
            <person name="Tanaka T."/>
            <person name="Ishii S."/>
            <person name="Yamamoto J."/>
            <person name="Saito K."/>
            <person name="Kawai Y."/>
            <person name="Isono Y."/>
            <person name="Nakamura Y."/>
            <person name="Nagahari K."/>
            <person name="Murakami K."/>
            <person name="Yasuda T."/>
            <person name="Iwayanagi T."/>
            <person name="Wagatsuma M."/>
            <person name="Shiratori A."/>
            <person name="Sudo H."/>
            <person name="Hosoiri T."/>
            <person name="Kaku Y."/>
            <person name="Kodaira H."/>
            <person name="Kondo H."/>
            <person name="Sugawara M."/>
            <person name="Takahashi M."/>
            <person name="Kanda K."/>
            <person name="Yokoi T."/>
            <person name="Furuya T."/>
            <person name="Kikkawa E."/>
            <person name="Omura Y."/>
            <person name="Abe K."/>
            <person name="Kamihara K."/>
            <person name="Katsuta N."/>
            <person name="Sato K."/>
            <person name="Tanikawa M."/>
            <person name="Yamazaki M."/>
            <person name="Ninomiya K."/>
            <person name="Ishibashi T."/>
            <person name="Yamashita H."/>
            <person name="Murakawa K."/>
            <person name="Fujimori K."/>
            <person name="Tanai H."/>
            <person name="Kimata M."/>
            <person name="Watanabe M."/>
            <person name="Hiraoka S."/>
            <person name="Chiba Y."/>
            <person name="Ishida S."/>
            <person name="Ono Y."/>
            <person name="Takiguchi S."/>
            <person name="Watanabe S."/>
            <person name="Yosida M."/>
            <person name="Hotuta T."/>
            <person name="Kusano J."/>
            <person name="Kanehori K."/>
            <person name="Takahashi-Fujii A."/>
            <person name="Hara H."/>
            <person name="Tanase T.-O."/>
            <person name="Nomura Y."/>
            <person name="Togiya S."/>
            <person name="Komai F."/>
            <person name="Hara R."/>
            <person name="Takeuchi K."/>
            <person name="Arita M."/>
            <person name="Imose N."/>
            <person name="Musashino K."/>
            <person name="Yuuki H."/>
            <person name="Oshima A."/>
            <person name="Sasaki N."/>
            <person name="Aotsuka S."/>
            <person name="Yoshikawa Y."/>
            <person name="Matsunawa H."/>
            <person name="Ichihara T."/>
            <person name="Shiohata N."/>
            <person name="Sano S."/>
            <person name="Moriya S."/>
            <person name="Momiyama H."/>
            <person name="Satoh N."/>
            <person name="Takami S."/>
            <person name="Terashima Y."/>
            <person name="Suzuki O."/>
            <person name="Nakagawa S."/>
            <person name="Senoh A."/>
            <person name="Mizoguchi H."/>
            <person name="Goto Y."/>
            <person name="Shimizu F."/>
            <person name="Wakebe H."/>
            <person name="Hishigaki H."/>
            <person name="Watanabe T."/>
            <person name="Sugiyama A."/>
            <person name="Takemoto M."/>
            <person name="Kawakami B."/>
            <person name="Yamazaki M."/>
            <person name="Watanabe K."/>
            <person name="Kumagai A."/>
            <person name="Itakura S."/>
            <person name="Fukuzumi Y."/>
            <person name="Fujimori Y."/>
            <person name="Komiyama M."/>
            <person name="Tashiro H."/>
            <person name="Tanigami A."/>
            <person name="Fujiwara T."/>
            <person name="Ono T."/>
            <person name="Yamada K."/>
            <person name="Fujii Y."/>
            <person name="Ozaki K."/>
            <person name="Hirao M."/>
            <person name="Ohmori Y."/>
            <person name="Kawabata A."/>
            <person name="Hikiji T."/>
            <person name="Kobatake N."/>
            <person name="Inagaki H."/>
            <person name="Ikema Y."/>
            <person name="Okamoto S."/>
            <person name="Okitani R."/>
            <person name="Kawakami T."/>
            <person name="Noguchi S."/>
            <person name="Itoh T."/>
            <person name="Shigeta K."/>
            <person name="Senba T."/>
            <person name="Matsumura K."/>
            <person name="Nakajima Y."/>
            <person name="Mizuno T."/>
            <person name="Morinaga M."/>
            <person name="Sasaki M."/>
            <person name="Togashi T."/>
            <person name="Oyama M."/>
            <person name="Hata H."/>
            <person name="Watanabe M."/>
            <person name="Komatsu T."/>
            <person name="Mizushima-Sugano J."/>
            <person name="Satoh T."/>
            <person name="Shirai Y."/>
            <person name="Takahashi Y."/>
            <person name="Nakagawa K."/>
            <person name="Okumura K."/>
            <person name="Nagase T."/>
            <person name="Nomura N."/>
            <person name="Kikuchi H."/>
            <person name="Masuho Y."/>
            <person name="Yamashita R."/>
            <person name="Nakai K."/>
            <person name="Yada T."/>
            <person name="Nakamura Y."/>
            <person name="Ohara O."/>
            <person name="Isogai T."/>
            <person name="Sugano S."/>
        </authorList>
    </citation>
    <scope>NUCLEOTIDE SEQUENCE [LARGE SCALE MRNA] (ISOFORMS 1 AND 2)</scope>
    <source>
        <tissue>Kidney</tissue>
    </source>
</reference>
<reference key="4">
    <citation type="submission" date="2005-07" db="EMBL/GenBank/DDBJ databases">
        <authorList>
            <person name="Mural R.J."/>
            <person name="Istrail S."/>
            <person name="Sutton G.G."/>
            <person name="Florea L."/>
            <person name="Halpern A.L."/>
            <person name="Mobarry C.M."/>
            <person name="Lippert R."/>
            <person name="Walenz B."/>
            <person name="Shatkay H."/>
            <person name="Dew I."/>
            <person name="Miller J.R."/>
            <person name="Flanigan M.J."/>
            <person name="Edwards N.J."/>
            <person name="Bolanos R."/>
            <person name="Fasulo D."/>
            <person name="Halldorsson B.V."/>
            <person name="Hannenhalli S."/>
            <person name="Turner R."/>
            <person name="Yooseph S."/>
            <person name="Lu F."/>
            <person name="Nusskern D.R."/>
            <person name="Shue B.C."/>
            <person name="Zheng X.H."/>
            <person name="Zhong F."/>
            <person name="Delcher A.L."/>
            <person name="Huson D.H."/>
            <person name="Kravitz S.A."/>
            <person name="Mouchard L."/>
            <person name="Reinert K."/>
            <person name="Remington K.A."/>
            <person name="Clark A.G."/>
            <person name="Waterman M.S."/>
            <person name="Eichler E.E."/>
            <person name="Adams M.D."/>
            <person name="Hunkapiller M.W."/>
            <person name="Myers E.W."/>
            <person name="Venter J.C."/>
        </authorList>
    </citation>
    <scope>NUCLEOTIDE SEQUENCE [LARGE SCALE GENOMIC DNA]</scope>
</reference>
<reference key="5">
    <citation type="journal article" date="2004" name="Genome Res.">
        <title>The status, quality, and expansion of the NIH full-length cDNA project: the Mammalian Gene Collection (MGC).</title>
        <authorList>
            <consortium name="The MGC Project Team"/>
        </authorList>
    </citation>
    <scope>NUCLEOTIDE SEQUENCE [LARGE SCALE MRNA] (ISOFORMS 1 AND 2)</scope>
    <source>
        <tissue>Brain</tissue>
    </source>
</reference>
<reference key="6">
    <citation type="journal article" date="2006" name="EMBO J.">
        <title>The orphan receptor GPR17 identified as a new dual uracil nucleotides/cysteinyl-leukotrienes receptor.</title>
        <authorList>
            <person name="Ciana P."/>
            <person name="Fumagalli M."/>
            <person name="Trincavelli M.L."/>
            <person name="Verderio C."/>
            <person name="Rosa P."/>
            <person name="Lecca D."/>
            <person name="Ferrario S."/>
            <person name="Parravicini C."/>
            <person name="Capra V."/>
            <person name="Gelosa P."/>
            <person name="Guerrini U."/>
            <person name="Belcredito S."/>
            <person name="Cimino M."/>
            <person name="Sironi L."/>
            <person name="Tremoli E."/>
            <person name="Rovati G.E."/>
            <person name="Martini C."/>
            <person name="Abbracchio M.P."/>
        </authorList>
    </citation>
    <scope>FUNCTION</scope>
    <scope>TISSUE SPECIFICITY</scope>
</reference>
<gene>
    <name type="primary">GPR17</name>
</gene>
<keyword id="KW-0002">3D-structure</keyword>
<keyword id="KW-0025">Alternative splicing</keyword>
<keyword id="KW-1003">Cell membrane</keyword>
<keyword id="KW-1015">Disulfide bond</keyword>
<keyword id="KW-0297">G-protein coupled receptor</keyword>
<keyword id="KW-0325">Glycoprotein</keyword>
<keyword id="KW-0472">Membrane</keyword>
<keyword id="KW-1267">Proteomics identification</keyword>
<keyword id="KW-0675">Receptor</keyword>
<keyword id="KW-1185">Reference proteome</keyword>
<keyword id="KW-0807">Transducer</keyword>
<keyword id="KW-0812">Transmembrane</keyword>
<keyword id="KW-1133">Transmembrane helix</keyword>
<organism>
    <name type="scientific">Homo sapiens</name>
    <name type="common">Human</name>
    <dbReference type="NCBI Taxonomy" id="9606"/>
    <lineage>
        <taxon>Eukaryota</taxon>
        <taxon>Metazoa</taxon>
        <taxon>Chordata</taxon>
        <taxon>Craniata</taxon>
        <taxon>Vertebrata</taxon>
        <taxon>Euteleostomi</taxon>
        <taxon>Mammalia</taxon>
        <taxon>Eutheria</taxon>
        <taxon>Euarchontoglires</taxon>
        <taxon>Primates</taxon>
        <taxon>Haplorrhini</taxon>
        <taxon>Catarrhini</taxon>
        <taxon>Hominidae</taxon>
        <taxon>Homo</taxon>
    </lineage>
</organism>